<protein>
    <recommendedName>
        <fullName>Interleukin-4</fullName>
        <shortName>IL-4</shortName>
    </recommendedName>
    <alternativeName>
        <fullName>B-cell stimulatory factor 1</fullName>
        <shortName>BSF-1</shortName>
    </alternativeName>
    <alternativeName>
        <fullName>Binetrakin</fullName>
    </alternativeName>
    <alternativeName>
        <fullName>Lymphocyte stimulatory factor 1</fullName>
    </alternativeName>
    <alternativeName>
        <fullName>Pitrakinra</fullName>
    </alternativeName>
</protein>
<sequence>MGLTSQLLPPLFFLLACAGNFVHGHKCDITLQEIIKTLNSLTEQKTLCTELTVTDIFAASKNTTEKETFCRAATVLRQFYSHHEKDTRCLGATAQQFHRHKQLIRFLKRLDRNLWGLAGLNSCPVKEANQSTLENFLERLKTIMREKYSKCSS</sequence>
<reference key="1">
    <citation type="journal article" date="1986" name="Proc. Natl. Acad. Sci. U.S.A.">
        <title>Isolation and characterization of a human interleukin cDNA clone, homologous to mouse B-cell stimulatory factor 1, that expresses B-cell- and T-cell-stimulating activities.</title>
        <authorList>
            <person name="Yokota T."/>
            <person name="Otsuka T."/>
            <person name="Mosmann T."/>
            <person name="Banchereau J."/>
            <person name="Defrance T."/>
            <person name="Blanchard D."/>
            <person name="de Vries J.E."/>
            <person name="Lee F."/>
            <person name="Arai K."/>
        </authorList>
    </citation>
    <scope>NUCLEOTIDE SEQUENCE [MRNA] (ISOFORM 1)</scope>
    <scope>FUNCTION</scope>
</reference>
<reference key="2">
    <citation type="journal article" date="1989" name="J. Immunol.">
        <title>Complete nucleotide sequence of the chromosomal gene for human IL-4 and its expression.</title>
        <authorList>
            <person name="Arai N."/>
            <person name="Nomura D."/>
            <person name="Villaret D."/>
            <person name="Malefijt R.D."/>
            <person name="Seiki M."/>
            <person name="Yoshida M."/>
            <person name="Minoshima S."/>
            <person name="Fukuyama R."/>
            <person name="Maekawa M."/>
            <person name="Kudoh J."/>
            <person name="Shimizu N."/>
            <person name="Yokota K."/>
            <person name="Abe E."/>
            <person name="Yokota T."/>
            <person name="Takebe Y."/>
            <person name="Arai K."/>
        </authorList>
    </citation>
    <scope>NUCLEOTIDE SEQUENCE [GENOMIC DNA]</scope>
</reference>
<reference key="3">
    <citation type="journal article" date="1995" name="Immunogenetics">
        <title>An alternatively spliced interleukin 4 form in lymphoid cells.</title>
        <authorList>
            <person name="Klein S.C."/>
            <person name="Golverdingen J."/>
            <person name="Bouwens A.G.M."/>
            <person name="Tilanus M.G.J."/>
        </authorList>
    </citation>
    <scope>NUCLEOTIDE SEQUENCE [MRNA] (ISOFORM 2)</scope>
</reference>
<reference key="4">
    <citation type="submission" date="2001-06" db="EMBL/GenBank/DDBJ databases">
        <authorList>
            <consortium name="SeattleSNPs variation discovery resource"/>
        </authorList>
    </citation>
    <scope>NUCLEOTIDE SEQUENCE [GENOMIC DNA]</scope>
</reference>
<reference key="5">
    <citation type="journal article" date="2004" name="Genome Res.">
        <title>The status, quality, and expansion of the NIH full-length cDNA project: the Mammalian Gene Collection (MGC).</title>
        <authorList>
            <consortium name="The MGC Project Team"/>
        </authorList>
    </citation>
    <scope>NUCLEOTIDE SEQUENCE [LARGE SCALE MRNA] (ISOFORM 1)</scope>
    <source>
        <tissue>Blood</tissue>
    </source>
</reference>
<reference key="6">
    <citation type="journal article" date="1988" name="Nucleic Acids Res.">
        <title>The 5' region of the human interleukin 4 gene: structure and potential regulatory elements.</title>
        <authorList>
            <person name="Eder A."/>
            <person name="Krafft-Czepa H."/>
            <person name="Krammer P.H."/>
        </authorList>
    </citation>
    <scope>NUCLEOTIDE SEQUENCE [GENOMIC DNA] OF 1-45</scope>
</reference>
<reference key="7">
    <citation type="journal article" date="1991" name="Biochemistry">
        <title>Disulfide assignments in recombinant mouse and human interleukin 4.</title>
        <authorList>
            <person name="Carr C."/>
            <person name="Aykent S."/>
            <person name="Kimack N.M."/>
            <person name="Levine A.D."/>
        </authorList>
    </citation>
    <scope>PARTIAL PROTEIN SEQUENCE</scope>
    <scope>GLYCOSYLATION AT ASN-62</scope>
    <scope>DISULFIDE BONDS</scope>
</reference>
<reference key="8">
    <citation type="journal article" date="1989" name="J. Immunol.">
        <title>Influence of recombinant IL-4, IFN-alpha, and IFN-gamma on the production of human IgE-binding factor (soluble CD23).</title>
        <authorList>
            <person name="Delespesse G."/>
            <person name="Sarfati M."/>
            <person name="Peleman R."/>
        </authorList>
    </citation>
    <scope>FUNCTION</scope>
</reference>
<reference key="9">
    <citation type="journal article" date="1988" name="J. Immunol.">
        <title>Human recombinant IL-4 induces activated B lymphocytes to produce IgG and IgM.</title>
        <authorList>
            <person name="Defrance T."/>
            <person name="Vanbervliet B."/>
            <person name="Pene J."/>
            <person name="Banchereau J."/>
        </authorList>
    </citation>
    <scope>FUNCTION</scope>
</reference>
<reference key="10">
    <citation type="journal article" date="1995" name="J. Biol. Chem.">
        <title>Activation of JAK3, but not JAK1, is critical to interleukin-4 (IL4) stimulated proliferation and requires a membrane-proximal region of IL4 receptor alpha.</title>
        <authorList>
            <person name="Malabarba M.G."/>
            <person name="Kirken R.A."/>
            <person name="Rui H."/>
            <person name="Koettnitz K."/>
            <person name="Kawamura M."/>
            <person name="O'Shea J.J."/>
            <person name="Kalthoff F.S."/>
            <person name="Farrar W.L."/>
        </authorList>
    </citation>
    <scope>FUNCTION</scope>
</reference>
<reference key="11">
    <citation type="journal article" date="1991" name="Proteins">
        <title>Experimental and theoretical studies of the three-dimensional structure of human interleukin-4.</title>
        <authorList>
            <person name="Curtis B.M."/>
            <person name="Presnell S.R."/>
            <person name="Srinivasan S."/>
            <person name="Sassenfeld H."/>
            <person name="Klinke R."/>
            <person name="Jeffery E."/>
            <person name="Cosman D."/>
            <person name="March C.J."/>
            <person name="Cohen F.E."/>
        </authorList>
    </citation>
    <scope>DISULFIDE BONDS</scope>
    <scope>3D-STRUCTURE MODELING</scope>
</reference>
<reference key="12">
    <citation type="journal article" date="1991" name="Biochemistry">
        <title>Secondary structure and topology of human interleukin 4 in solution.</title>
        <authorList>
            <person name="Redfield C."/>
            <person name="Smith L.J."/>
            <person name="Boyd J."/>
            <person name="Lawrence G.M.P."/>
            <person name="Edwards R.G."/>
            <person name="Smith R.A.G."/>
            <person name="Dobson C.M."/>
        </authorList>
    </citation>
    <scope>STRUCTURE BY NMR</scope>
</reference>
<reference key="13">
    <citation type="journal article" date="1992" name="J. Biol. Chem.">
        <title>Crystal structure of recombinant human interleukin-4.</title>
        <authorList>
            <person name="Walter M.R."/>
            <person name="Cook W.J."/>
            <person name="Zhao B.G."/>
            <person name="Cameron R.P. Jr."/>
            <person name="Ealick S.E."/>
            <person name="Walter R.L. Jr."/>
            <person name="Reichert P."/>
            <person name="Nagabhushan T.L."/>
            <person name="Trotta P.P."/>
            <person name="Bugg C.E."/>
        </authorList>
    </citation>
    <scope>X-RAY CRYSTALLOGRAPHY (2.35 ANGSTROMS)</scope>
</reference>
<reference key="14">
    <citation type="journal article" date="1992" name="FEBS Lett.">
        <title>Crystal structure of human recombinant interleukin-4 at 2.25-A resolution.</title>
        <authorList>
            <person name="Wlodaver A."/>
            <person name="Pavlovsky A."/>
            <person name="Gustchina A."/>
        </authorList>
    </citation>
    <scope>X-RAY CRYSTALLOGRAPHY (2.25 ANGSTROMS)</scope>
</reference>
<reference key="15">
    <citation type="journal article" date="1992" name="J. Mol. Biol.">
        <title>Human interleukin 4. The solution structure of a four-helix bundle protein.</title>
        <authorList>
            <person name="Smith L.J."/>
            <person name="Redfield C."/>
            <person name="Boyd J."/>
            <person name="Lawrence G.M.P."/>
            <person name="Edwards R.G."/>
            <person name="Smith R.A.G."/>
            <person name="Dobson C.M."/>
        </authorList>
    </citation>
    <scope>STRUCTURE BY NMR</scope>
</reference>
<reference key="16">
    <citation type="journal article" date="1992" name="Biochemistry">
        <title>1H, 15N, 13C, and 13CO assignments of human interleukin-4 using three-dimensional double- and triple-resonance heteronuclear magnetic resonance spectroscopy.</title>
        <authorList>
            <person name="Powers R."/>
            <person name="Garret D.S."/>
            <person name="March C.J."/>
            <person name="Frieden E.A."/>
            <person name="Gronenborn A.M."/>
            <person name="Clore G.M."/>
        </authorList>
    </citation>
    <scope>STRUCTURE BY NMR</scope>
</reference>
<reference key="17">
    <citation type="journal article" date="1992" name="Biochemistry">
        <title>Determination of the secondary structure and folding topology of human interleukin-4 using three-dimensional heteronuclear magnetic resonance spectroscopy.</title>
        <authorList>
            <person name="Garret D.S."/>
            <person name="Powers R."/>
            <person name="March C.J."/>
            <person name="Frieden E.A."/>
            <person name="Clore G.M."/>
            <person name="Gronenborn A.M."/>
        </authorList>
    </citation>
    <scope>STRUCTURE BY NMR</scope>
</reference>
<reference key="18">
    <citation type="journal article" date="1992" name="Science">
        <title>Three-dimensional solution structure of human interleukin-4 by multidimensional heteronuclear magnetic resonance spectroscopy.</title>
        <authorList>
            <person name="Powers R."/>
            <person name="Garret D.S."/>
            <person name="March C.J."/>
            <person name="Frieden E.A."/>
            <person name="Gronenborn A.M."/>
            <person name="Clore G.M."/>
        </authorList>
    </citation>
    <scope>STRUCTURE BY NMR</scope>
</reference>
<reference key="19">
    <citation type="journal article" date="1994" name="J. Mol. Biol.">
        <title>Aspects of receptor binding and signalling of interleukin-4 investigated by site-directed mutagenesis and NMR spectroscopy.</title>
        <authorList>
            <person name="Mueller T."/>
            <person name="Dieckmann T."/>
            <person name="Sebald W."/>
            <person name="Oschkinat H."/>
        </authorList>
    </citation>
    <scope>MUTAGENESIS</scope>
    <scope>STRUCTURE BY NMR</scope>
</reference>
<reference key="20">
    <citation type="journal article" date="1994" name="Nat. Struct. Biol.">
        <title>Comparison of four independently determined structures of human recombinant interleukin-4.</title>
        <authorList>
            <person name="Smith L.J."/>
            <person name="Redfield C."/>
            <person name="Smith R.A.G."/>
            <person name="Dobson C.M."/>
            <person name="Clore G.M."/>
            <person name="Gronenborn A.M."/>
            <person name="Walter M.R."/>
            <person name="Naganbushan T.L."/>
            <person name="Wlodawer A."/>
        </authorList>
    </citation>
    <scope>COMPARISON OF STRUCTURES</scope>
</reference>
<reference evidence="10" key="21">
    <citation type="journal article" date="1999" name="Cell">
        <title>Crystal structure of the interleukin-4/receptor alpha chain complex reveals a mosaic binding interface.</title>
        <authorList>
            <person name="Hage T."/>
            <person name="Sebald W."/>
            <person name="Reinemer P."/>
        </authorList>
    </citation>
    <scope>X-RAY CRYSTALLOGRAPHY (2.30 ANGSTROMS) OF 25-153 IN COMPLEX WITH IL4R</scope>
    <scope>DISULFIDE BONDS</scope>
    <scope>FUNCTION</scope>
</reference>
<reference evidence="9" key="22">
    <citation type="journal article" date="2001" name="Acta Crystallogr.">
        <title>Structure of interleukin 4 mutant E9A suggests polar steering in receptor-complex formation.</title>
        <authorList>
            <person name="Hulsmeyer M."/>
            <person name="Scheufler C."/>
            <person name="Dreyer M.K."/>
        </authorList>
    </citation>
    <scope>X-RAY CRYSTALLOGRAPHY (2.05 ANGSTROMS) OF 25-153</scope>
    <scope>DISULFIDE BONDS</scope>
    <scope>FUNCTION</scope>
    <scope>MUTAGENESIS OF GLU-33</scope>
    <scope>INTERACTION WITH IL4R</scope>
</reference>
<reference evidence="11 12" key="23">
    <citation type="journal article" date="2008" name="Cell">
        <title>Molecular and structural basis of cytokine receptor pleiotropy in the interleukin-4/13 system.</title>
        <authorList>
            <person name="LaPorte S.L."/>
            <person name="Juo Z.S."/>
            <person name="Vaclavikova J."/>
            <person name="Colf L.A."/>
            <person name="Qi X."/>
            <person name="Heller N.M."/>
            <person name="Keegan A.D."/>
            <person name="Garcia K.C."/>
        </authorList>
    </citation>
    <scope>X-RAY CRYSTALLOGRAPHY (2.93 ANGSTROMS) OF 25-153</scope>
    <scope>DISULFIDE BONDS</scope>
    <scope>INTERACTION WITH IL13RA1</scope>
    <scope>FUNCTION</scope>
</reference>
<reference key="24">
    <citation type="journal article" date="2004" name="Hum. Mol. Genet.">
        <title>Polymorphism in the P-selectin and interleukin-4 genes as determinants of stroke: a population-based, prospective genetic analysis.</title>
        <authorList>
            <person name="Zee R.Y.L."/>
            <person name="Cook N.R."/>
            <person name="Cheng S."/>
            <person name="Reynolds R."/>
            <person name="Erlich H.A."/>
            <person name="Lindpaintner K."/>
            <person name="Ridker P.M."/>
        </authorList>
    </citation>
    <scope>INVOLVEMENT IN SUSCEPTIBILITY TO ISCHSTR</scope>
</reference>
<name>IL4_HUMAN</name>
<proteinExistence type="evidence at protein level"/>
<comment type="function">
    <text evidence="1 2 3 5">Cytokine secreted primarily by mast cells, T-cells, eosinophils, and basophils that plays a role in regulating antibody production, hematopoiesis and inflammation, and the development of effector T-cell responses (PubMed:1993171, PubMed:3016727). Induces the expression of class II MHC molecules on resting B-cells. Enhances both secretion and cell surface expression of IgE and IgG1 (PubMed:1993171). Also regulates the expression of the low affinity Fc receptor for IgE (CD23) on both lymphocytes and monocytes (PubMed:2521231). Positively regulates IL31RA expression in macrophages. Stimulates autophagy in dendritic cells by interfering with mTORC1 signaling and through the induction of RUFY4. In addition, plays a critical role in higher functions of the normal brain, such as memory and learning (By similarity). Upon binding to IL4, IL4R receptor dimerizes either with the common IL2R gamma chain/IL2RG to produce the type 1 signaling complex, located mainly on hematopoietic cells, or with the IL13RA1 to produce the type 2 complex, which is also expressed on nonhematopoietic cells (PubMed:10219247, PubMed:11526337, PubMed:18243101). Engagement of both types of receptors initiates JAK3 and to a lower extend JAK1 phosphorylation leading to activation of the signal transducer and activator of transcription 6/STAT6 (PubMed:7721895).</text>
</comment>
<comment type="subunit">
    <text evidence="2 3">Interacts with IL4R (PubMed:10219247, PubMed:11526337). Interacts with IL13RA1 (PubMed:18243101).</text>
</comment>
<comment type="interaction">
    <interactant intactId="EBI-367025">
        <id>P05112</id>
    </interactant>
    <interactant intactId="EBI-1391535">
        <id>P78552</id>
        <label>IL13RA1</label>
    </interactant>
    <organismsDiffer>false</organismsDiffer>
    <experiments>3</experiments>
</comment>
<comment type="interaction">
    <interactant intactId="EBI-367025">
        <id>P05112</id>
    </interactant>
    <interactant intactId="EBI-367009">
        <id>P24394</id>
        <label>IL4R</label>
    </interactant>
    <organismsDiffer>false</organismsDiffer>
    <experiments>7</experiments>
</comment>
<comment type="subcellular location">
    <subcellularLocation>
        <location>Secreted</location>
    </subcellularLocation>
</comment>
<comment type="alternative products">
    <event type="alternative splicing"/>
    <isoform>
        <id>P05112-1</id>
        <name>1</name>
        <name>Long</name>
        <sequence type="displayed"/>
    </isoform>
    <isoform>
        <id>P05112-2</id>
        <name>2</name>
        <name>Short</name>
        <name>IL-4delta2</name>
        <sequence type="described" ref="VSP_002672"/>
    </isoform>
</comment>
<comment type="disease" evidence="4">
    <disease id="DI-01835">
        <name>Ischemic stroke</name>
        <acronym>ISCHSTR</acronym>
        <description>A stroke is an acute neurologic event leading to death of neural tissue of the brain and resulting in loss of motor, sensory and/or cognitive function. Ischemic strokes, resulting from vascular occlusion, is considered to be a highly complex disease consisting of a group of heterogeneous disorders with multiple genetic and environmental risk factors.</description>
        <dbReference type="MIM" id="601367"/>
    </disease>
    <text>Disease susceptibility is associated with variants affecting the gene represented in this entry.</text>
</comment>
<comment type="similarity">
    <text evidence="8">Belongs to the IL-4/IL-13 family.</text>
</comment>
<gene>
    <name type="primary">IL4</name>
</gene>
<accession>P05112</accession>
<accession>Q14630</accession>
<accession>Q6NZ77</accession>
<evidence type="ECO:0000250" key="1">
    <source>
        <dbReference type="UniProtKB" id="P07750"/>
    </source>
</evidence>
<evidence type="ECO:0000269" key="2">
    <source>
    </source>
</evidence>
<evidence type="ECO:0000269" key="3">
    <source>
    </source>
</evidence>
<evidence type="ECO:0000269" key="4">
    <source>
    </source>
</evidence>
<evidence type="ECO:0000269" key="5">
    <source>
    </source>
</evidence>
<evidence type="ECO:0000269" key="6">
    <source>
    </source>
</evidence>
<evidence type="ECO:0000303" key="7">
    <source>
    </source>
</evidence>
<evidence type="ECO:0000305" key="8"/>
<evidence type="ECO:0007744" key="9">
    <source>
        <dbReference type="PDB" id="1HZI"/>
    </source>
</evidence>
<evidence type="ECO:0007744" key="10">
    <source>
        <dbReference type="PDB" id="1IAR"/>
    </source>
</evidence>
<evidence type="ECO:0007744" key="11">
    <source>
        <dbReference type="PDB" id="3BPL"/>
    </source>
</evidence>
<evidence type="ECO:0007744" key="12">
    <source>
        <dbReference type="PDB" id="3BPN"/>
    </source>
</evidence>
<evidence type="ECO:0007829" key="13">
    <source>
        <dbReference type="PDB" id="1BBN"/>
    </source>
</evidence>
<evidence type="ECO:0007829" key="14">
    <source>
        <dbReference type="PDB" id="1CYL"/>
    </source>
</evidence>
<evidence type="ECO:0007829" key="15">
    <source>
        <dbReference type="PDB" id="2D48"/>
    </source>
</evidence>
<evidence type="ECO:0007829" key="16">
    <source>
        <dbReference type="PDB" id="5FHX"/>
    </source>
</evidence>
<keyword id="KW-0002">3D-structure</keyword>
<keyword id="KW-0025">Alternative splicing</keyword>
<keyword id="KW-0075">B-cell activation</keyword>
<keyword id="KW-0202">Cytokine</keyword>
<keyword id="KW-0903">Direct protein sequencing</keyword>
<keyword id="KW-1015">Disulfide bond</keyword>
<keyword id="KW-0325">Glycoprotein</keyword>
<keyword id="KW-0339">Growth factor</keyword>
<keyword id="KW-1267">Proteomics identification</keyword>
<keyword id="KW-1185">Reference proteome</keyword>
<keyword id="KW-0964">Secreted</keyword>
<keyword id="KW-0732">Signal</keyword>
<organism>
    <name type="scientific">Homo sapiens</name>
    <name type="common">Human</name>
    <dbReference type="NCBI Taxonomy" id="9606"/>
    <lineage>
        <taxon>Eukaryota</taxon>
        <taxon>Metazoa</taxon>
        <taxon>Chordata</taxon>
        <taxon>Craniata</taxon>
        <taxon>Vertebrata</taxon>
        <taxon>Euteleostomi</taxon>
        <taxon>Mammalia</taxon>
        <taxon>Eutheria</taxon>
        <taxon>Euarchontoglires</taxon>
        <taxon>Primates</taxon>
        <taxon>Haplorrhini</taxon>
        <taxon>Catarrhini</taxon>
        <taxon>Hominidae</taxon>
        <taxon>Homo</taxon>
    </lineage>
</organism>
<dbReference type="EMBL" id="M13982">
    <property type="protein sequence ID" value="AAA59149.1"/>
    <property type="molecule type" value="mRNA"/>
</dbReference>
<dbReference type="EMBL" id="M23442">
    <property type="protein sequence ID" value="AAA59150.1"/>
    <property type="molecule type" value="Genomic_DNA"/>
</dbReference>
<dbReference type="EMBL" id="X81851">
    <property type="protein sequence ID" value="CAA57444.1"/>
    <property type="molecule type" value="mRNA"/>
</dbReference>
<dbReference type="EMBL" id="AF395008">
    <property type="protein sequence ID" value="AAK71324.1"/>
    <property type="molecule type" value="Genomic_DNA"/>
</dbReference>
<dbReference type="EMBL" id="BC066277">
    <property type="protein sequence ID" value="AAH66277.1"/>
    <property type="molecule type" value="mRNA"/>
</dbReference>
<dbReference type="EMBL" id="BC067514">
    <property type="protein sequence ID" value="AAH67514.1"/>
    <property type="molecule type" value="mRNA"/>
</dbReference>
<dbReference type="EMBL" id="BC070123">
    <property type="protein sequence ID" value="AAH70123.1"/>
    <property type="molecule type" value="mRNA"/>
</dbReference>
<dbReference type="EMBL" id="X06750">
    <property type="protein sequence ID" value="CAA29925.1"/>
    <property type="molecule type" value="Genomic_DNA"/>
</dbReference>
<dbReference type="CCDS" id="CCDS4158.1">
    <molecule id="P05112-1"/>
</dbReference>
<dbReference type="CCDS" id="CCDS4159.1">
    <molecule id="P05112-2"/>
</dbReference>
<dbReference type="PIR" id="A30546">
    <property type="entry name" value="A25946"/>
</dbReference>
<dbReference type="RefSeq" id="NP_000580.1">
    <molecule id="P05112-1"/>
    <property type="nucleotide sequence ID" value="NM_000589.4"/>
</dbReference>
<dbReference type="RefSeq" id="NP_758858.1">
    <molecule id="P05112-2"/>
    <property type="nucleotide sequence ID" value="NM_172348.3"/>
</dbReference>
<dbReference type="PDB" id="1BBN">
    <property type="method" value="NMR"/>
    <property type="chains" value="A=25-153"/>
</dbReference>
<dbReference type="PDB" id="1BCN">
    <property type="method" value="NMR"/>
    <property type="chains" value="A=25-153"/>
</dbReference>
<dbReference type="PDB" id="1CYL">
    <property type="method" value="NMR"/>
    <property type="chains" value="A=25-153"/>
</dbReference>
<dbReference type="PDB" id="1HIJ">
    <property type="method" value="X-ray"/>
    <property type="resolution" value="3.00 A"/>
    <property type="chains" value="A=25-153"/>
</dbReference>
<dbReference type="PDB" id="1HIK">
    <property type="method" value="X-ray"/>
    <property type="resolution" value="2.60 A"/>
    <property type="chains" value="A=25-153"/>
</dbReference>
<dbReference type="PDB" id="1HZI">
    <property type="method" value="X-ray"/>
    <property type="resolution" value="2.05 A"/>
    <property type="chains" value="A=25-153"/>
</dbReference>
<dbReference type="PDB" id="1IAR">
    <property type="method" value="X-ray"/>
    <property type="resolution" value="2.30 A"/>
    <property type="chains" value="A=25-153"/>
</dbReference>
<dbReference type="PDB" id="1ITI">
    <property type="method" value="NMR"/>
    <property type="chains" value="A=25-153"/>
</dbReference>
<dbReference type="PDB" id="1ITL">
    <property type="method" value="NMR"/>
    <property type="chains" value="A=25-153"/>
</dbReference>
<dbReference type="PDB" id="1ITM">
    <property type="method" value="NMR"/>
    <property type="chains" value="A=25-153"/>
</dbReference>
<dbReference type="PDB" id="1RCB">
    <property type="method" value="X-ray"/>
    <property type="resolution" value="2.25 A"/>
    <property type="chains" value="A=25-153"/>
</dbReference>
<dbReference type="PDB" id="2B8U">
    <property type="method" value="X-ray"/>
    <property type="resolution" value="1.80 A"/>
    <property type="chains" value="A=25-153"/>
</dbReference>
<dbReference type="PDB" id="2B8X">
    <property type="method" value="X-ray"/>
    <property type="resolution" value="1.70 A"/>
    <property type="chains" value="A=25-153"/>
</dbReference>
<dbReference type="PDB" id="2B8Y">
    <property type="method" value="X-ray"/>
    <property type="resolution" value="1.80 A"/>
    <property type="chains" value="A=25-153"/>
</dbReference>
<dbReference type="PDB" id="2B8Z">
    <property type="method" value="X-ray"/>
    <property type="resolution" value="2.50 A"/>
    <property type="chains" value="A=25-153"/>
</dbReference>
<dbReference type="PDB" id="2B90">
    <property type="method" value="X-ray"/>
    <property type="resolution" value="2.10 A"/>
    <property type="chains" value="A=25-153"/>
</dbReference>
<dbReference type="PDB" id="2B91">
    <property type="method" value="X-ray"/>
    <property type="resolution" value="2.00 A"/>
    <property type="chains" value="A=25-153"/>
</dbReference>
<dbReference type="PDB" id="2CYK">
    <property type="method" value="NMR"/>
    <property type="chains" value="A=25-153"/>
</dbReference>
<dbReference type="PDB" id="2D48">
    <property type="method" value="X-ray"/>
    <property type="resolution" value="1.65 A"/>
    <property type="chains" value="A=25-153"/>
</dbReference>
<dbReference type="PDB" id="2INT">
    <property type="method" value="X-ray"/>
    <property type="resolution" value="2.35 A"/>
    <property type="chains" value="A=25-153"/>
</dbReference>
<dbReference type="PDB" id="3BPL">
    <property type="method" value="X-ray"/>
    <property type="resolution" value="2.93 A"/>
    <property type="chains" value="A=25-153"/>
</dbReference>
<dbReference type="PDB" id="3BPN">
    <property type="method" value="X-ray"/>
    <property type="resolution" value="3.02 A"/>
    <property type="chains" value="A=25-153"/>
</dbReference>
<dbReference type="PDB" id="3QB7">
    <property type="method" value="X-ray"/>
    <property type="resolution" value="3.24 A"/>
    <property type="chains" value="A/B=25-153"/>
</dbReference>
<dbReference type="PDB" id="4YDY">
    <property type="method" value="X-ray"/>
    <property type="resolution" value="2.00 A"/>
    <property type="chains" value="I/J=25-153"/>
</dbReference>
<dbReference type="PDB" id="5FHX">
    <property type="method" value="X-ray"/>
    <property type="resolution" value="2.55 A"/>
    <property type="chains" value="A=30-153"/>
</dbReference>
<dbReference type="PDB" id="6OEL">
    <property type="method" value="X-ray"/>
    <property type="resolution" value="3.10 A"/>
    <property type="chains" value="A=25-153"/>
</dbReference>
<dbReference type="PDB" id="8A4F">
    <property type="method" value="NMR"/>
    <property type="chains" value="A=25-153"/>
</dbReference>
<dbReference type="PDB" id="8CGF">
    <property type="method" value="NMR"/>
    <property type="chains" value="A=25-153"/>
</dbReference>
<dbReference type="PDB" id="8CH7">
    <property type="method" value="NMR"/>
    <property type="chains" value="A=25-153"/>
</dbReference>
<dbReference type="PDBsum" id="1BBN"/>
<dbReference type="PDBsum" id="1BCN"/>
<dbReference type="PDBsum" id="1CYL"/>
<dbReference type="PDBsum" id="1HIJ"/>
<dbReference type="PDBsum" id="1HIK"/>
<dbReference type="PDBsum" id="1HZI"/>
<dbReference type="PDBsum" id="1IAR"/>
<dbReference type="PDBsum" id="1ITI"/>
<dbReference type="PDBsum" id="1ITL"/>
<dbReference type="PDBsum" id="1ITM"/>
<dbReference type="PDBsum" id="1RCB"/>
<dbReference type="PDBsum" id="2B8U"/>
<dbReference type="PDBsum" id="2B8X"/>
<dbReference type="PDBsum" id="2B8Y"/>
<dbReference type="PDBsum" id="2B8Z"/>
<dbReference type="PDBsum" id="2B90"/>
<dbReference type="PDBsum" id="2B91"/>
<dbReference type="PDBsum" id="2CYK"/>
<dbReference type="PDBsum" id="2D48"/>
<dbReference type="PDBsum" id="2INT"/>
<dbReference type="PDBsum" id="3BPL"/>
<dbReference type="PDBsum" id="3BPN"/>
<dbReference type="PDBsum" id="3QB7"/>
<dbReference type="PDBsum" id="4YDY"/>
<dbReference type="PDBsum" id="5FHX"/>
<dbReference type="PDBsum" id="6OEL"/>
<dbReference type="PDBsum" id="8A4F"/>
<dbReference type="PDBsum" id="8CGF"/>
<dbReference type="PDBsum" id="8CH7"/>
<dbReference type="BMRB" id="P05112"/>
<dbReference type="SMR" id="P05112"/>
<dbReference type="BioGRID" id="109779">
    <property type="interactions" value="3"/>
</dbReference>
<dbReference type="ComplexPortal" id="CPX-624">
    <property type="entry name" value="Interleukin-4 receptor-ligand type-2 complex"/>
</dbReference>
<dbReference type="ComplexPortal" id="CPX-8834">
    <property type="entry name" value="Interleukin-4 receptor-ligand type-1 complex"/>
</dbReference>
<dbReference type="CORUM" id="P05112"/>
<dbReference type="DIP" id="DIP-3222N"/>
<dbReference type="FunCoup" id="P05112">
    <property type="interactions" value="898"/>
</dbReference>
<dbReference type="IntAct" id="P05112">
    <property type="interactions" value="3"/>
</dbReference>
<dbReference type="MINT" id="P05112"/>
<dbReference type="STRING" id="9606.ENSP00000231449"/>
<dbReference type="BindingDB" id="P05112"/>
<dbReference type="ChEMBL" id="CHEMBL3712894"/>
<dbReference type="DrugBank" id="DB15130">
    <property type="generic name" value="Dexpramipexole"/>
</dbReference>
<dbReference type="DrugBank" id="DB12159">
    <property type="generic name" value="Dupilumab"/>
</dbReference>
<dbReference type="DrugBank" id="DB06560">
    <property type="generic name" value="Pascolizumab"/>
</dbReference>
<dbReference type="DrugBank" id="DB16318">
    <property type="generic name" value="Romilkimab"/>
</dbReference>
<dbReference type="DrugBank" id="DB11466">
    <property type="generic name" value="Tepoxalin"/>
</dbReference>
<dbReference type="DrugCentral" id="P05112"/>
<dbReference type="GlyCosmos" id="P05112">
    <property type="glycosylation" value="1 site, No reported glycans"/>
</dbReference>
<dbReference type="GlyGen" id="P05112">
    <property type="glycosylation" value="3 sites"/>
</dbReference>
<dbReference type="iPTMnet" id="P05112"/>
<dbReference type="PhosphoSitePlus" id="P05112"/>
<dbReference type="BioMuta" id="IL4"/>
<dbReference type="DMDM" id="124337"/>
<dbReference type="MassIVE" id="P05112"/>
<dbReference type="PaxDb" id="9606-ENSP00000231449"/>
<dbReference type="PeptideAtlas" id="P05112"/>
<dbReference type="ProteomicsDB" id="51797">
    <molecule id="P05112-1"/>
</dbReference>
<dbReference type="ProteomicsDB" id="51798">
    <molecule id="P05112-2"/>
</dbReference>
<dbReference type="ABCD" id="P05112">
    <property type="antibodies" value="332 sequenced antibodies"/>
</dbReference>
<dbReference type="Antibodypedia" id="14502">
    <property type="antibodies" value="1893 antibodies from 51 providers"/>
</dbReference>
<dbReference type="DNASU" id="3565"/>
<dbReference type="Ensembl" id="ENST00000231449.7">
    <molecule id="P05112-1"/>
    <property type="protein sequence ID" value="ENSP00000231449.2"/>
    <property type="gene ID" value="ENSG00000113520.11"/>
</dbReference>
<dbReference type="Ensembl" id="ENST00000350025.2">
    <molecule id="P05112-2"/>
    <property type="protein sequence ID" value="ENSP00000325190.3"/>
    <property type="gene ID" value="ENSG00000113520.11"/>
</dbReference>
<dbReference type="GeneID" id="3565"/>
<dbReference type="KEGG" id="hsa:3565"/>
<dbReference type="MANE-Select" id="ENST00000231449.7">
    <property type="protein sequence ID" value="ENSP00000231449.2"/>
    <property type="RefSeq nucleotide sequence ID" value="NM_000589.4"/>
    <property type="RefSeq protein sequence ID" value="NP_000580.1"/>
</dbReference>
<dbReference type="UCSC" id="uc003kxk.3">
    <molecule id="P05112-1"/>
    <property type="organism name" value="human"/>
</dbReference>
<dbReference type="AGR" id="HGNC:6014"/>
<dbReference type="CTD" id="3565"/>
<dbReference type="DisGeNET" id="3565"/>
<dbReference type="GeneCards" id="IL4"/>
<dbReference type="HGNC" id="HGNC:6014">
    <property type="gene designation" value="IL4"/>
</dbReference>
<dbReference type="HPA" id="ENSG00000113520">
    <property type="expression patterns" value="Not detected"/>
</dbReference>
<dbReference type="MIM" id="147780">
    <property type="type" value="gene"/>
</dbReference>
<dbReference type="MIM" id="601367">
    <property type="type" value="phenotype"/>
</dbReference>
<dbReference type="neXtProt" id="NX_P05112"/>
<dbReference type="OpenTargets" id="ENSG00000113520"/>
<dbReference type="PharmGKB" id="PA197"/>
<dbReference type="VEuPathDB" id="HostDB:ENSG00000113520"/>
<dbReference type="eggNOG" id="KOG3886">
    <property type="taxonomic scope" value="Eukaryota"/>
</dbReference>
<dbReference type="GeneTree" id="ENSGT00390000013108"/>
<dbReference type="HOGENOM" id="CLU_154691_0_0_1"/>
<dbReference type="InParanoid" id="P05112"/>
<dbReference type="OMA" id="GTPCTEM"/>
<dbReference type="OrthoDB" id="9528087at2759"/>
<dbReference type="PAN-GO" id="P05112">
    <property type="GO annotations" value="34 GO annotations based on evolutionary models"/>
</dbReference>
<dbReference type="PhylomeDB" id="P05112"/>
<dbReference type="TreeFam" id="TF336383"/>
<dbReference type="PathwayCommons" id="P05112"/>
<dbReference type="Reactome" id="R-HSA-6785807">
    <property type="pathway name" value="Interleukin-4 and Interleukin-13 signaling"/>
</dbReference>
<dbReference type="Reactome" id="R-HSA-9012546">
    <property type="pathway name" value="Interleukin-18 signaling"/>
</dbReference>
<dbReference type="SignaLink" id="P05112"/>
<dbReference type="SIGNOR" id="P05112"/>
<dbReference type="BioGRID-ORCS" id="3565">
    <property type="hits" value="6 hits in 1149 CRISPR screens"/>
</dbReference>
<dbReference type="EvolutionaryTrace" id="P05112"/>
<dbReference type="GeneWiki" id="Interleukin_4"/>
<dbReference type="GenomeRNAi" id="3565"/>
<dbReference type="Pharos" id="P05112">
    <property type="development level" value="Tbio"/>
</dbReference>
<dbReference type="PRO" id="PR:P05112"/>
<dbReference type="Proteomes" id="UP000005640">
    <property type="component" value="Chromosome 5"/>
</dbReference>
<dbReference type="RNAct" id="P05112">
    <property type="molecule type" value="protein"/>
</dbReference>
<dbReference type="Bgee" id="ENSG00000113520">
    <property type="expression patterns" value="Expressed in oocyte and 97 other cell types or tissues"/>
</dbReference>
<dbReference type="ExpressionAtlas" id="P05112">
    <property type="expression patterns" value="baseline and differential"/>
</dbReference>
<dbReference type="GO" id="GO:0005576">
    <property type="term" value="C:extracellular region"/>
    <property type="evidence" value="ECO:0000304"/>
    <property type="project" value="Reactome"/>
</dbReference>
<dbReference type="GO" id="GO:0005615">
    <property type="term" value="C:extracellular space"/>
    <property type="evidence" value="ECO:0000314"/>
    <property type="project" value="UniProt"/>
</dbReference>
<dbReference type="GO" id="GO:0005125">
    <property type="term" value="F:cytokine activity"/>
    <property type="evidence" value="ECO:0000314"/>
    <property type="project" value="UniProt"/>
</dbReference>
<dbReference type="GO" id="GO:0008083">
    <property type="term" value="F:growth factor activity"/>
    <property type="evidence" value="ECO:0000303"/>
    <property type="project" value="UniProtKB"/>
</dbReference>
<dbReference type="GO" id="GO:0005136">
    <property type="term" value="F:interleukin-4 receptor binding"/>
    <property type="evidence" value="ECO:0000304"/>
    <property type="project" value="UniProtKB"/>
</dbReference>
<dbReference type="GO" id="GO:0030183">
    <property type="term" value="P:B cell differentiation"/>
    <property type="evidence" value="ECO:0000304"/>
    <property type="project" value="UniProtKB"/>
</dbReference>
<dbReference type="GO" id="GO:0007259">
    <property type="term" value="P:cell surface receptor signaling pathway via JAK-STAT"/>
    <property type="evidence" value="ECO:0000316"/>
    <property type="project" value="ARUK-UCL"/>
</dbReference>
<dbReference type="GO" id="GO:0008203">
    <property type="term" value="P:cholesterol metabolic process"/>
    <property type="evidence" value="ECO:0000250"/>
    <property type="project" value="UniProtKB"/>
</dbReference>
<dbReference type="GO" id="GO:0097028">
    <property type="term" value="P:dendritic cell differentiation"/>
    <property type="evidence" value="ECO:0000314"/>
    <property type="project" value="DFLAT"/>
</dbReference>
<dbReference type="GO" id="GO:0006955">
    <property type="term" value="P:immune response"/>
    <property type="evidence" value="ECO:0000304"/>
    <property type="project" value="ProtInc"/>
</dbReference>
<dbReference type="GO" id="GO:0035771">
    <property type="term" value="P:interleukin-4-mediated signaling pathway"/>
    <property type="evidence" value="ECO:0000314"/>
    <property type="project" value="ARUK-UCL"/>
</dbReference>
<dbReference type="GO" id="GO:0042116">
    <property type="term" value="P:macrophage activation"/>
    <property type="evidence" value="ECO:0000316"/>
    <property type="project" value="ARUK-UCL"/>
</dbReference>
<dbReference type="GO" id="GO:0043011">
    <property type="term" value="P:myeloid dendritic cell differentiation"/>
    <property type="evidence" value="ECO:0000314"/>
    <property type="project" value="UniProtKB"/>
</dbReference>
<dbReference type="GO" id="GO:0043066">
    <property type="term" value="P:negative regulation of apoptotic process"/>
    <property type="evidence" value="ECO:0000250"/>
    <property type="project" value="UniProtKB"/>
</dbReference>
<dbReference type="GO" id="GO:1903845">
    <property type="term" value="P:negative regulation of cellular response to transforming growth factor beta stimulus"/>
    <property type="evidence" value="ECO:0000314"/>
    <property type="project" value="UniProtKB"/>
</dbReference>
<dbReference type="GO" id="GO:1903660">
    <property type="term" value="P:negative regulation of complement-dependent cytotoxicity"/>
    <property type="evidence" value="ECO:0000315"/>
    <property type="project" value="AgBase"/>
</dbReference>
<dbReference type="GO" id="GO:0045892">
    <property type="term" value="P:negative regulation of DNA-templated transcription"/>
    <property type="evidence" value="ECO:0000314"/>
    <property type="project" value="UniProtKB"/>
</dbReference>
<dbReference type="GO" id="GO:2000352">
    <property type="term" value="P:negative regulation of endothelial cell apoptotic process"/>
    <property type="evidence" value="ECO:0000315"/>
    <property type="project" value="AgBase"/>
</dbReference>
<dbReference type="GO" id="GO:0010633">
    <property type="term" value="P:negative regulation of epithelial cell migration"/>
    <property type="evidence" value="ECO:0000314"/>
    <property type="project" value="CACAO"/>
</dbReference>
<dbReference type="GO" id="GO:0050728">
    <property type="term" value="P:negative regulation of inflammatory response"/>
    <property type="evidence" value="ECO:0000316"/>
    <property type="project" value="ARUK-UCL"/>
</dbReference>
<dbReference type="GO" id="GO:0150079">
    <property type="term" value="P:negative regulation of neuroinflammatory response"/>
    <property type="evidence" value="ECO:0000305"/>
    <property type="project" value="ARUK-UCL"/>
</dbReference>
<dbReference type="GO" id="GO:0045671">
    <property type="term" value="P:negative regulation of osteoclast differentiation"/>
    <property type="evidence" value="ECO:0000250"/>
    <property type="project" value="UniProtKB"/>
</dbReference>
<dbReference type="GO" id="GO:0000122">
    <property type="term" value="P:negative regulation of transcription by RNA polymerase II"/>
    <property type="evidence" value="ECO:0000314"/>
    <property type="project" value="UniProtKB"/>
</dbReference>
<dbReference type="GO" id="GO:0032720">
    <property type="term" value="P:negative regulation of tumor necrosis factor production"/>
    <property type="evidence" value="ECO:0000250"/>
    <property type="project" value="ARUK-UCL"/>
</dbReference>
<dbReference type="GO" id="GO:0150076">
    <property type="term" value="P:neuroinflammatory response"/>
    <property type="evidence" value="ECO:0000250"/>
    <property type="project" value="ARUK-UCL"/>
</dbReference>
<dbReference type="GO" id="GO:1900223">
    <property type="term" value="P:positive regulation of amyloid-beta clearance"/>
    <property type="evidence" value="ECO:0000250"/>
    <property type="project" value="ARUK-UCL"/>
</dbReference>
<dbReference type="GO" id="GO:2001171">
    <property type="term" value="P:positive regulation of ATP biosynthetic process"/>
    <property type="evidence" value="ECO:0000250"/>
    <property type="project" value="ARUK-UCL"/>
</dbReference>
<dbReference type="GO" id="GO:0030890">
    <property type="term" value="P:positive regulation of B cell proliferation"/>
    <property type="evidence" value="ECO:0000250"/>
    <property type="project" value="UniProtKB"/>
</dbReference>
<dbReference type="GO" id="GO:0030335">
    <property type="term" value="P:positive regulation of cell migration"/>
    <property type="evidence" value="ECO:0000316"/>
    <property type="project" value="ARUK-UCL"/>
</dbReference>
<dbReference type="GO" id="GO:0008284">
    <property type="term" value="P:positive regulation of cell population proliferation"/>
    <property type="evidence" value="ECO:0000316"/>
    <property type="project" value="ARUK-UCL"/>
</dbReference>
<dbReference type="GO" id="GO:1901857">
    <property type="term" value="P:positive regulation of cellular respiration"/>
    <property type="evidence" value="ECO:0000250"/>
    <property type="project" value="ARUK-UCL"/>
</dbReference>
<dbReference type="GO" id="GO:0120162">
    <property type="term" value="P:positive regulation of cold-induced thermogenesis"/>
    <property type="evidence" value="ECO:0000250"/>
    <property type="project" value="YuBioLab"/>
</dbReference>
<dbReference type="GO" id="GO:0045893">
    <property type="term" value="P:positive regulation of DNA-templated transcription"/>
    <property type="evidence" value="ECO:0000314"/>
    <property type="project" value="UniProtKB"/>
</dbReference>
<dbReference type="GO" id="GO:0010628">
    <property type="term" value="P:positive regulation of gene expression"/>
    <property type="evidence" value="ECO:0000250"/>
    <property type="project" value="ARUK-UCL"/>
</dbReference>
<dbReference type="GO" id="GO:0032733">
    <property type="term" value="P:positive regulation of interleukin-10 production"/>
    <property type="evidence" value="ECO:0000316"/>
    <property type="project" value="ARUK-UCL"/>
</dbReference>
<dbReference type="GO" id="GO:0032736">
    <property type="term" value="P:positive regulation of interleukin-13 production"/>
    <property type="evidence" value="ECO:0000314"/>
    <property type="project" value="UniProtKB"/>
</dbReference>
<dbReference type="GO" id="GO:0048295">
    <property type="term" value="P:positive regulation of isotype switching to IgE isotypes"/>
    <property type="evidence" value="ECO:0000250"/>
    <property type="project" value="UniProtKB"/>
</dbReference>
<dbReference type="GO" id="GO:0048304">
    <property type="term" value="P:positive regulation of isotype switching to IgG isotypes"/>
    <property type="evidence" value="ECO:0000250"/>
    <property type="project" value="UniProtKB"/>
</dbReference>
<dbReference type="GO" id="GO:0016239">
    <property type="term" value="P:positive regulation of macroautophagy"/>
    <property type="evidence" value="ECO:0000250"/>
    <property type="project" value="UniProtKB"/>
</dbReference>
<dbReference type="GO" id="GO:0045348">
    <property type="term" value="P:positive regulation of MHC class II biosynthetic process"/>
    <property type="evidence" value="ECO:0000250"/>
    <property type="project" value="UniProtKB"/>
</dbReference>
<dbReference type="GO" id="GO:0048260">
    <property type="term" value="P:positive regulation of receptor-mediated endocytosis"/>
    <property type="evidence" value="ECO:0000250"/>
    <property type="project" value="ARUK-UCL"/>
</dbReference>
<dbReference type="GO" id="GO:0045582">
    <property type="term" value="P:positive regulation of T cell differentiation"/>
    <property type="evidence" value="ECO:0000314"/>
    <property type="project" value="UniProtKB"/>
</dbReference>
<dbReference type="GO" id="GO:0042102">
    <property type="term" value="P:positive regulation of T cell proliferation"/>
    <property type="evidence" value="ECO:0000250"/>
    <property type="project" value="UniProtKB"/>
</dbReference>
<dbReference type="GO" id="GO:2000553">
    <property type="term" value="P:positive regulation of T-helper 2 cell cytokine production"/>
    <property type="evidence" value="ECO:0000314"/>
    <property type="project" value="UniProtKB"/>
</dbReference>
<dbReference type="GO" id="GO:0045944">
    <property type="term" value="P:positive regulation of transcription by RNA polymerase II"/>
    <property type="evidence" value="ECO:0000316"/>
    <property type="project" value="ARUK-UCL"/>
</dbReference>
<dbReference type="GO" id="GO:0050776">
    <property type="term" value="P:regulation of immune response"/>
    <property type="evidence" value="ECO:0000250"/>
    <property type="project" value="UniProtKB"/>
</dbReference>
<dbReference type="GO" id="GO:0045191">
    <property type="term" value="P:regulation of isotype switching"/>
    <property type="evidence" value="ECO:0000304"/>
    <property type="project" value="UniProtKB"/>
</dbReference>
<dbReference type="GO" id="GO:0042110">
    <property type="term" value="P:T cell activation"/>
    <property type="evidence" value="ECO:0000316"/>
    <property type="project" value="BHF-UCL"/>
</dbReference>
<dbReference type="GO" id="GO:0042092">
    <property type="term" value="P:type 2 immune response"/>
    <property type="evidence" value="ECO:0000304"/>
    <property type="project" value="UniProtKB"/>
</dbReference>
<dbReference type="FunFam" id="1.20.1250.10:FF:000014">
    <property type="entry name" value="Interleukin-4"/>
    <property type="match status" value="1"/>
</dbReference>
<dbReference type="Gene3D" id="1.20.1250.10">
    <property type="match status" value="1"/>
</dbReference>
<dbReference type="InterPro" id="IPR009079">
    <property type="entry name" value="4_helix_cytokine-like_core"/>
</dbReference>
<dbReference type="InterPro" id="IPR002354">
    <property type="entry name" value="IL-4"/>
</dbReference>
<dbReference type="InterPro" id="IPR001325">
    <property type="entry name" value="IL-4/IL-13"/>
</dbReference>
<dbReference type="InterPro" id="IPR018096">
    <property type="entry name" value="IL-4/IL-13_CS"/>
</dbReference>
<dbReference type="PANTHER" id="PTHR47401">
    <property type="entry name" value="INTERLEUKIN-4"/>
    <property type="match status" value="1"/>
</dbReference>
<dbReference type="PANTHER" id="PTHR47401:SF1">
    <property type="entry name" value="INTERLEUKIN-4"/>
    <property type="match status" value="1"/>
</dbReference>
<dbReference type="Pfam" id="PF00727">
    <property type="entry name" value="IL4"/>
    <property type="match status" value="1"/>
</dbReference>
<dbReference type="PIRSF" id="PIRSF001941">
    <property type="entry name" value="Interleukin_4"/>
    <property type="match status" value="1"/>
</dbReference>
<dbReference type="PRINTS" id="PR00431">
    <property type="entry name" value="INTERLEUKIN4"/>
</dbReference>
<dbReference type="SMART" id="SM00190">
    <property type="entry name" value="IL4_13"/>
    <property type="match status" value="1"/>
</dbReference>
<dbReference type="SUPFAM" id="SSF47266">
    <property type="entry name" value="4-helical cytokines"/>
    <property type="match status" value="1"/>
</dbReference>
<dbReference type="PROSITE" id="PS00838">
    <property type="entry name" value="INTERLEUKIN_4_13"/>
    <property type="match status" value="1"/>
</dbReference>
<feature type="signal peptide">
    <location>
        <begin position="1"/>
        <end position="24"/>
    </location>
</feature>
<feature type="chain" id="PRO_0000015532" description="Interleukin-4">
    <location>
        <begin position="25"/>
        <end position="153"/>
    </location>
</feature>
<feature type="glycosylation site" description="N-linked (GlcNAc...) asparagine" evidence="6">
    <location>
        <position position="62"/>
    </location>
</feature>
<feature type="disulfide bond" evidence="2 3 5 6">
    <location>
        <begin position="27"/>
        <end position="151"/>
    </location>
</feature>
<feature type="disulfide bond" evidence="2 3 5 6">
    <location>
        <begin position="48"/>
        <end position="89"/>
    </location>
</feature>
<feature type="disulfide bond" evidence="2 3 5">
    <location>
        <begin position="70"/>
        <end position="123"/>
    </location>
</feature>
<feature type="splice variant" id="VSP_002672" description="In isoform 2." evidence="7">
    <location>
        <begin position="46"/>
        <end position="61"/>
    </location>
</feature>
<feature type="sequence variant" id="VAR_020392" description="In dbSNP:rs4986964.">
    <original>C</original>
    <variation>R</variation>
    <location>
        <position position="27"/>
    </location>
</feature>
<feature type="mutagenesis site" description="About 500-fold lower interaction with IL4R than WT." evidence="3">
    <original>E</original>
    <variation>A</variation>
    <location>
        <position position="33"/>
    </location>
</feature>
<feature type="turn" evidence="13">
    <location>
        <begin position="26"/>
        <end position="29"/>
    </location>
</feature>
<feature type="helix" evidence="15">
    <location>
        <begin position="30"/>
        <end position="41"/>
    </location>
</feature>
<feature type="helix" evidence="16">
    <location>
        <begin position="42"/>
        <end position="44"/>
    </location>
</feature>
<feature type="helix" evidence="15">
    <location>
        <begin position="48"/>
        <end position="50"/>
    </location>
</feature>
<feature type="strand" evidence="15">
    <location>
        <begin position="51"/>
        <end position="54"/>
    </location>
</feature>
<feature type="helix" evidence="15">
    <location>
        <begin position="56"/>
        <end position="58"/>
    </location>
</feature>
<feature type="turn" evidence="14">
    <location>
        <begin position="60"/>
        <end position="62"/>
    </location>
</feature>
<feature type="helix" evidence="15">
    <location>
        <begin position="65"/>
        <end position="83"/>
    </location>
</feature>
<feature type="turn" evidence="15">
    <location>
        <begin position="87"/>
        <end position="89"/>
    </location>
</feature>
<feature type="helix" evidence="15">
    <location>
        <begin position="94"/>
        <end position="118"/>
    </location>
</feature>
<feature type="strand" evidence="15">
    <location>
        <begin position="130"/>
        <end position="132"/>
    </location>
</feature>
<feature type="helix" evidence="15">
    <location>
        <begin position="133"/>
        <end position="151"/>
    </location>
</feature>